<accession>Q5AI80</accession>
<accession>A0A1D8PCW8</accession>
<accession>O94033</accession>
<organism>
    <name type="scientific">Candida albicans (strain SC5314 / ATCC MYA-2876)</name>
    <name type="common">Yeast</name>
    <dbReference type="NCBI Taxonomy" id="237561"/>
    <lineage>
        <taxon>Eukaryota</taxon>
        <taxon>Fungi</taxon>
        <taxon>Dikarya</taxon>
        <taxon>Ascomycota</taxon>
        <taxon>Saccharomycotina</taxon>
        <taxon>Pichiomycetes</taxon>
        <taxon>Debaryomycetaceae</taxon>
        <taxon>Candida/Lodderomyces clade</taxon>
        <taxon>Candida</taxon>
    </lineage>
</organism>
<protein>
    <recommendedName>
        <fullName>RNA-binding protein VTS1</fullName>
    </recommendedName>
</protein>
<proteinExistence type="inferred from homology"/>
<reference key="1">
    <citation type="submission" date="1998-11" db="EMBL/GenBank/DDBJ databases">
        <title>Candida albicans strain 1161 genome pilot sequencing project.</title>
        <authorList>
            <person name="Oliver K."/>
            <person name="Harris D."/>
            <person name="Barrell B.G."/>
            <person name="Rajandream M.A."/>
        </authorList>
    </citation>
    <scope>NUCLEOTIDE SEQUENCE [LARGE SCALE GENOMIC DNA]</scope>
    <source>
        <strain>1161</strain>
    </source>
</reference>
<reference key="2">
    <citation type="journal article" date="2004" name="Proc. Natl. Acad. Sci. U.S.A.">
        <title>The diploid genome sequence of Candida albicans.</title>
        <authorList>
            <person name="Jones T."/>
            <person name="Federspiel N.A."/>
            <person name="Chibana H."/>
            <person name="Dungan J."/>
            <person name="Kalman S."/>
            <person name="Magee B.B."/>
            <person name="Newport G."/>
            <person name="Thorstenson Y.R."/>
            <person name="Agabian N."/>
            <person name="Magee P.T."/>
            <person name="Davis R.W."/>
            <person name="Scherer S."/>
        </authorList>
    </citation>
    <scope>NUCLEOTIDE SEQUENCE [LARGE SCALE GENOMIC DNA]</scope>
    <source>
        <strain>SC5314 / ATCC MYA-2876</strain>
    </source>
</reference>
<reference key="3">
    <citation type="journal article" date="2007" name="Genome Biol.">
        <title>Assembly of the Candida albicans genome into sixteen supercontigs aligned on the eight chromosomes.</title>
        <authorList>
            <person name="van het Hoog M."/>
            <person name="Rast T.J."/>
            <person name="Martchenko M."/>
            <person name="Grindle S."/>
            <person name="Dignard D."/>
            <person name="Hogues H."/>
            <person name="Cuomo C."/>
            <person name="Berriman M."/>
            <person name="Scherer S."/>
            <person name="Magee B.B."/>
            <person name="Whiteway M."/>
            <person name="Chibana H."/>
            <person name="Nantel A."/>
            <person name="Magee P.T."/>
        </authorList>
    </citation>
    <scope>GENOME REANNOTATION</scope>
    <source>
        <strain>SC5314 / ATCC MYA-2876</strain>
    </source>
</reference>
<reference key="4">
    <citation type="journal article" date="2013" name="Genome Biol.">
        <title>Assembly of a phased diploid Candida albicans genome facilitates allele-specific measurements and provides a simple model for repeat and indel structure.</title>
        <authorList>
            <person name="Muzzey D."/>
            <person name="Schwartz K."/>
            <person name="Weissman J.S."/>
            <person name="Sherlock G."/>
        </authorList>
    </citation>
    <scope>NUCLEOTIDE SEQUENCE [LARGE SCALE GENOMIC DNA]</scope>
    <scope>GENOME REANNOTATION</scope>
    <source>
        <strain>SC5314 / ATCC MYA-2876</strain>
    </source>
</reference>
<sequence length="679" mass="74745">MEQSQGNIANSPPTSEIPQRPIILSPPPLDQNSLNQSFNNLPTSVPQGHANRQQSVGYNLQHEFETLTANLDLDLNSSTRNITQSAPPNQQQQQQSQLQATDSQLLTTTADLNTKPAHSVKPTLAAPAASRYGSHLGSDLLGKSTSSLLGDNNPVSPIQKFSSINTQLDSLLNNNISSAKSKTGTNSPFLSNAGLSNRPQSVNDFSNIFNRQDQQQQQQSQTFSSFTTQQQSQNQNQNQNQSNFYSDLIVFSNWIENLNPQDNLTMIDYLCSNLPLDILLTFKSKLDLHLQGGSAQNQQSQQSQLLPQFVMSPYSQYDQQLYNDMDKLNIQDDSFKSKHGNSSFRSNHLANLIDKVERPKSADPFVNNTKYGQYQQQSYNQHSYQQQHPLVDRAKSPTSHLYEKTNFLQLAAANSNNTGGNYNQYMPSLSSTSSSLGQANSNNTSTRDDMDLKLGALATINSRVALDSNRKHPHVATPGSTWNNQTHTHSHISPPHHNQMHSGVRNVSNFEESINRSLNSSSVPASMHKSNYSNSHGNNSNNNSGNTNINSNQNKGTHKKKINSPTSAVSMQQNSTSVNSTTSGNGGANANVNTTATTSSSSSSSMPIEVSSLELLNNIPAWLKLLRLHKYTECLKDVPWKELIELDNDQLESKGVAALGARRKLLKAFDVVKNNLPVV</sequence>
<comment type="function">
    <text evidence="2">RNA-binding protein involved in post-transcriptional regulation through transcript degradation.</text>
</comment>
<comment type="subunit">
    <text evidence="2">Monomer. Binds to RNA.</text>
</comment>
<comment type="subcellular location">
    <subcellularLocation>
        <location evidence="2">Cytoplasm</location>
        <location evidence="2">Cytosol</location>
    </subcellularLocation>
    <subcellularLocation>
        <location evidence="1">Cytoplasm</location>
        <location evidence="1">P-body</location>
    </subcellularLocation>
</comment>
<comment type="similarity">
    <text evidence="5">Belongs to the VTS1 family.</text>
</comment>
<gene>
    <name type="primary">VTS1</name>
    <name type="ordered locus">CAALFM_C102850WA</name>
    <name type="ORF">Ca49C10.19</name>
    <name type="ORF">CaO19.10490</name>
    <name type="ORF">CaO19.2973</name>
</gene>
<name>VTS1_CANAL</name>
<dbReference type="EMBL" id="AL033497">
    <property type="protein sequence ID" value="CAA21983.1"/>
    <property type="molecule type" value="Genomic_DNA"/>
</dbReference>
<dbReference type="EMBL" id="CP017623">
    <property type="protein sequence ID" value="AOW25966.1"/>
    <property type="molecule type" value="Genomic_DNA"/>
</dbReference>
<dbReference type="PIR" id="T52163">
    <property type="entry name" value="T52163"/>
</dbReference>
<dbReference type="RefSeq" id="XP_721472.2">
    <property type="nucleotide sequence ID" value="XM_716379.2"/>
</dbReference>
<dbReference type="SMR" id="Q5AI80"/>
<dbReference type="FunCoup" id="Q5AI80">
    <property type="interactions" value="46"/>
</dbReference>
<dbReference type="STRING" id="237561.Q5AI80"/>
<dbReference type="EnsemblFungi" id="C1_02850W_A-T">
    <property type="protein sequence ID" value="C1_02850W_A-T-p1"/>
    <property type="gene ID" value="C1_02850W_A"/>
</dbReference>
<dbReference type="GeneID" id="3636862"/>
<dbReference type="KEGG" id="cal:CAALFM_C102850WA"/>
<dbReference type="CGD" id="CAL0000193097">
    <property type="gene designation" value="orf19.10490"/>
</dbReference>
<dbReference type="VEuPathDB" id="FungiDB:C1_02850W_A"/>
<dbReference type="eggNOG" id="KOG3791">
    <property type="taxonomic scope" value="Eukaryota"/>
</dbReference>
<dbReference type="HOGENOM" id="CLU_443421_0_0_1"/>
<dbReference type="InParanoid" id="Q5AI80"/>
<dbReference type="OrthoDB" id="2155283at2759"/>
<dbReference type="PRO" id="PR:Q5AI80"/>
<dbReference type="Proteomes" id="UP000000559">
    <property type="component" value="Chromosome 1"/>
</dbReference>
<dbReference type="GO" id="GO:0005829">
    <property type="term" value="C:cytosol"/>
    <property type="evidence" value="ECO:0007669"/>
    <property type="project" value="UniProtKB-SubCell"/>
</dbReference>
<dbReference type="GO" id="GO:0000932">
    <property type="term" value="C:P-body"/>
    <property type="evidence" value="ECO:0000318"/>
    <property type="project" value="GO_Central"/>
</dbReference>
<dbReference type="GO" id="GO:0003729">
    <property type="term" value="F:mRNA binding"/>
    <property type="evidence" value="ECO:0000318"/>
    <property type="project" value="GO_Central"/>
</dbReference>
<dbReference type="GO" id="GO:0000166">
    <property type="term" value="F:nucleotide binding"/>
    <property type="evidence" value="ECO:0007669"/>
    <property type="project" value="UniProtKB-KW"/>
</dbReference>
<dbReference type="GO" id="GO:0000289">
    <property type="term" value="P:nuclear-transcribed mRNA poly(A) tail shortening"/>
    <property type="evidence" value="ECO:0000318"/>
    <property type="project" value="GO_Central"/>
</dbReference>
<dbReference type="GO" id="GO:0015031">
    <property type="term" value="P:protein transport"/>
    <property type="evidence" value="ECO:0007669"/>
    <property type="project" value="UniProtKB-KW"/>
</dbReference>
<dbReference type="GO" id="GO:0044010">
    <property type="term" value="P:single-species biofilm formation"/>
    <property type="evidence" value="ECO:0000315"/>
    <property type="project" value="CGD"/>
</dbReference>
<dbReference type="CDD" id="cd09556">
    <property type="entry name" value="SAM_VTS1_fungal"/>
    <property type="match status" value="1"/>
</dbReference>
<dbReference type="FunFam" id="1.10.150.50:FF:000136">
    <property type="entry name" value="Protein VTS1"/>
    <property type="match status" value="1"/>
</dbReference>
<dbReference type="Gene3D" id="1.10.150.50">
    <property type="entry name" value="Transcription Factor, Ets-1"/>
    <property type="match status" value="1"/>
</dbReference>
<dbReference type="InterPro" id="IPR001660">
    <property type="entry name" value="SAM"/>
</dbReference>
<dbReference type="InterPro" id="IPR013761">
    <property type="entry name" value="SAM/pointed_sf"/>
</dbReference>
<dbReference type="InterPro" id="IPR050897">
    <property type="entry name" value="SMAUG/VTS1_RNA-bind"/>
</dbReference>
<dbReference type="InterPro" id="IPR037635">
    <property type="entry name" value="VTS1_SAM"/>
</dbReference>
<dbReference type="PANTHER" id="PTHR12515:SF5">
    <property type="entry name" value="PROTEIN SMAUG"/>
    <property type="match status" value="1"/>
</dbReference>
<dbReference type="PANTHER" id="PTHR12515">
    <property type="entry name" value="STERILE ALPHA MOTIF DOMAIN CONTAINING PROTEIN 4-RELATED"/>
    <property type="match status" value="1"/>
</dbReference>
<dbReference type="Pfam" id="PF07647">
    <property type="entry name" value="SAM_2"/>
    <property type="match status" value="1"/>
</dbReference>
<dbReference type="SMART" id="SM00454">
    <property type="entry name" value="SAM"/>
    <property type="match status" value="1"/>
</dbReference>
<dbReference type="SUPFAM" id="SSF47769">
    <property type="entry name" value="SAM/Pointed domain"/>
    <property type="match status" value="1"/>
</dbReference>
<dbReference type="PROSITE" id="PS50105">
    <property type="entry name" value="SAM_DOMAIN"/>
    <property type="match status" value="1"/>
</dbReference>
<feature type="chain" id="PRO_0000081448" description="RNA-binding protein VTS1">
    <location>
        <begin position="1"/>
        <end position="679"/>
    </location>
</feature>
<feature type="domain" description="SAM" evidence="3">
    <location>
        <begin position="614"/>
        <end position="675"/>
    </location>
</feature>
<feature type="region of interest" description="Disordered" evidence="4">
    <location>
        <begin position="1"/>
        <end position="50"/>
    </location>
</feature>
<feature type="region of interest" description="Disordered" evidence="4">
    <location>
        <begin position="79"/>
        <end position="100"/>
    </location>
</feature>
<feature type="region of interest" description="Disordered" evidence="4">
    <location>
        <begin position="179"/>
        <end position="239"/>
    </location>
</feature>
<feature type="region of interest" description="Disordered" evidence="4">
    <location>
        <begin position="469"/>
        <end position="502"/>
    </location>
</feature>
<feature type="region of interest" description="Disordered" evidence="4">
    <location>
        <begin position="516"/>
        <end position="604"/>
    </location>
</feature>
<feature type="compositionally biased region" description="Polar residues" evidence="4">
    <location>
        <begin position="1"/>
        <end position="17"/>
    </location>
</feature>
<feature type="compositionally biased region" description="Polar residues" evidence="4">
    <location>
        <begin position="30"/>
        <end position="50"/>
    </location>
</feature>
<feature type="compositionally biased region" description="Polar residues" evidence="4">
    <location>
        <begin position="79"/>
        <end position="89"/>
    </location>
</feature>
<feature type="compositionally biased region" description="Low complexity" evidence="4">
    <location>
        <begin position="90"/>
        <end position="100"/>
    </location>
</feature>
<feature type="compositionally biased region" description="Polar residues" evidence="4">
    <location>
        <begin position="179"/>
        <end position="213"/>
    </location>
</feature>
<feature type="compositionally biased region" description="Low complexity" evidence="4">
    <location>
        <begin position="214"/>
        <end position="239"/>
    </location>
</feature>
<feature type="compositionally biased region" description="Low complexity" evidence="4">
    <location>
        <begin position="530"/>
        <end position="554"/>
    </location>
</feature>
<feature type="compositionally biased region" description="Polar residues" evidence="4">
    <location>
        <begin position="563"/>
        <end position="573"/>
    </location>
</feature>
<feature type="compositionally biased region" description="Low complexity" evidence="4">
    <location>
        <begin position="574"/>
        <end position="604"/>
    </location>
</feature>
<feature type="sequence conflict" description="In Ref. 1; CAA21983." evidence="5" ref="1">
    <original>S</original>
    <variation>G</variation>
    <location>
        <position position="178"/>
    </location>
</feature>
<feature type="sequence conflict" description="In Ref. 1; CAA21983." evidence="5" ref="1">
    <original>Y</original>
    <variation>H</variation>
    <location>
        <position position="384"/>
    </location>
</feature>
<feature type="sequence conflict" description="In Ref. 1; CAA21983." evidence="5" ref="1">
    <original>I</original>
    <variation>V</variation>
    <location>
        <position position="549"/>
    </location>
</feature>
<evidence type="ECO:0000250" key="1">
    <source>
        <dbReference type="UniProtKB" id="J9VVN9"/>
    </source>
</evidence>
<evidence type="ECO:0000250" key="2">
    <source>
        <dbReference type="UniProtKB" id="Q08831"/>
    </source>
</evidence>
<evidence type="ECO:0000255" key="3">
    <source>
        <dbReference type="PROSITE-ProRule" id="PRU00184"/>
    </source>
</evidence>
<evidence type="ECO:0000256" key="4">
    <source>
        <dbReference type="SAM" id="MobiDB-lite"/>
    </source>
</evidence>
<evidence type="ECO:0000305" key="5"/>
<keyword id="KW-0963">Cytoplasm</keyword>
<keyword id="KW-0547">Nucleotide-binding</keyword>
<keyword id="KW-0653">Protein transport</keyword>
<keyword id="KW-1185">Reference proteome</keyword>
<keyword id="KW-0694">RNA-binding</keyword>
<keyword id="KW-0813">Transport</keyword>